<keyword id="KW-0997">Cell inner membrane</keyword>
<keyword id="KW-1003">Cell membrane</keyword>
<keyword id="KW-0472">Membrane</keyword>
<keyword id="KW-0812">Transmembrane</keyword>
<keyword id="KW-1133">Transmembrane helix</keyword>
<organism>
    <name type="scientific">Enterobacter sp. (strain 638)</name>
    <dbReference type="NCBI Taxonomy" id="399742"/>
    <lineage>
        <taxon>Bacteria</taxon>
        <taxon>Pseudomonadati</taxon>
        <taxon>Pseudomonadota</taxon>
        <taxon>Gammaproteobacteria</taxon>
        <taxon>Enterobacterales</taxon>
        <taxon>Enterobacteriaceae</taxon>
        <taxon>Enterobacter</taxon>
    </lineage>
</organism>
<sequence>MVISPLALRRLSYGLIALVLLSALILVWTALQRQESTLAIRPVSQGASVPDGFYIWHHLDANGIQFKSITPQDDVLLIKFDSSAQSAAAKVVLDRSLPRGYIIALQDDQSQTAVWLTRLRDTSHRFG</sequence>
<reference key="1">
    <citation type="journal article" date="2010" name="PLoS Genet.">
        <title>Genome sequence of the plant growth promoting endophytic bacterium Enterobacter sp. 638.</title>
        <authorList>
            <person name="Taghavi S."/>
            <person name="van der Lelie D."/>
            <person name="Hoffman A."/>
            <person name="Zhang Y.B."/>
            <person name="Walla M.D."/>
            <person name="Vangronsveld J."/>
            <person name="Newman L."/>
            <person name="Monchy S."/>
        </authorList>
    </citation>
    <scope>NUCLEOTIDE SEQUENCE [LARGE SCALE GENOMIC DNA]</scope>
    <source>
        <strain>638</strain>
    </source>
</reference>
<comment type="function">
    <text evidence="1">Modulates the activity of the EnvZ/OmpR two-component regulatory system, probably by directly modulating EnvZ enzymatic activity and increasing stability of phosphorylated OmpR.</text>
</comment>
<comment type="subunit">
    <text evidence="1">Interacts with EnvZ.</text>
</comment>
<comment type="subcellular location">
    <subcellularLocation>
        <location evidence="1">Cell inner membrane</location>
        <topology evidence="1">Single-pass membrane protein</topology>
    </subcellularLocation>
</comment>
<comment type="similarity">
    <text evidence="1">Belongs to the MzrA family.</text>
</comment>
<gene>
    <name evidence="1" type="primary">mzrA</name>
    <name type="ordered locus">Ent638_3550</name>
</gene>
<accession>A4WES8</accession>
<proteinExistence type="inferred from homology"/>
<feature type="chain" id="PRO_0000413184" description="Modulator protein MzrA">
    <location>
        <begin position="1"/>
        <end position="127"/>
    </location>
</feature>
<feature type="topological domain" description="Cytoplasmic" evidence="1">
    <location>
        <begin position="1"/>
        <end position="10"/>
    </location>
</feature>
<feature type="transmembrane region" description="Helical" evidence="1">
    <location>
        <begin position="11"/>
        <end position="31"/>
    </location>
</feature>
<feature type="topological domain" description="Periplasmic" evidence="1">
    <location>
        <begin position="32"/>
        <end position="127"/>
    </location>
</feature>
<dbReference type="EMBL" id="CP000653">
    <property type="protein sequence ID" value="ABP62208.1"/>
    <property type="molecule type" value="Genomic_DNA"/>
</dbReference>
<dbReference type="RefSeq" id="WP_015960534.1">
    <property type="nucleotide sequence ID" value="NC_009436.1"/>
</dbReference>
<dbReference type="SMR" id="A4WES8"/>
<dbReference type="STRING" id="399742.Ent638_3550"/>
<dbReference type="KEGG" id="ent:Ent638_3550"/>
<dbReference type="eggNOG" id="ENOG5032NIM">
    <property type="taxonomic scope" value="Bacteria"/>
</dbReference>
<dbReference type="HOGENOM" id="CLU_153761_0_0_6"/>
<dbReference type="OrthoDB" id="6414235at2"/>
<dbReference type="Proteomes" id="UP000000230">
    <property type="component" value="Chromosome"/>
</dbReference>
<dbReference type="GO" id="GO:0005886">
    <property type="term" value="C:plasma membrane"/>
    <property type="evidence" value="ECO:0007669"/>
    <property type="project" value="UniProtKB-SubCell"/>
</dbReference>
<dbReference type="GO" id="GO:0019901">
    <property type="term" value="F:protein kinase binding"/>
    <property type="evidence" value="ECO:0007669"/>
    <property type="project" value="UniProtKB-UniRule"/>
</dbReference>
<dbReference type="Gene3D" id="3.30.70.260">
    <property type="match status" value="1"/>
</dbReference>
<dbReference type="HAMAP" id="MF_00904">
    <property type="entry name" value="Modulator_MzrA"/>
    <property type="match status" value="1"/>
</dbReference>
<dbReference type="InterPro" id="IPR026574">
    <property type="entry name" value="Modulator_MzrA"/>
</dbReference>
<dbReference type="InterPro" id="IPR027398">
    <property type="entry name" value="SecD-TM"/>
</dbReference>
<dbReference type="NCBIfam" id="NF007915">
    <property type="entry name" value="PRK10629.1"/>
    <property type="match status" value="1"/>
</dbReference>
<dbReference type="Pfam" id="PF13721">
    <property type="entry name" value="SecD-TM1"/>
    <property type="match status" value="1"/>
</dbReference>
<name>MZRA_ENT38</name>
<protein>
    <recommendedName>
        <fullName evidence="1">Modulator protein MzrA</fullName>
    </recommendedName>
</protein>
<evidence type="ECO:0000255" key="1">
    <source>
        <dbReference type="HAMAP-Rule" id="MF_00904"/>
    </source>
</evidence>